<feature type="chain" id="PRO_1000005170" description="Small ribosomal subunit protein bS21">
    <location>
        <begin position="1"/>
        <end position="71"/>
    </location>
</feature>
<gene>
    <name evidence="1" type="primary">rpsU</name>
    <name type="ordered locus">Shew185_1191</name>
</gene>
<reference key="1">
    <citation type="submission" date="2007-07" db="EMBL/GenBank/DDBJ databases">
        <title>Complete sequence of chromosome of Shewanella baltica OS185.</title>
        <authorList>
            <consortium name="US DOE Joint Genome Institute"/>
            <person name="Copeland A."/>
            <person name="Lucas S."/>
            <person name="Lapidus A."/>
            <person name="Barry K."/>
            <person name="Glavina del Rio T."/>
            <person name="Dalin E."/>
            <person name="Tice H."/>
            <person name="Pitluck S."/>
            <person name="Sims D."/>
            <person name="Brettin T."/>
            <person name="Bruce D."/>
            <person name="Detter J.C."/>
            <person name="Han C."/>
            <person name="Schmutz J."/>
            <person name="Larimer F."/>
            <person name="Land M."/>
            <person name="Hauser L."/>
            <person name="Kyrpides N."/>
            <person name="Mikhailova N."/>
            <person name="Brettar I."/>
            <person name="Rodrigues J."/>
            <person name="Konstantinidis K."/>
            <person name="Tiedje J."/>
            <person name="Richardson P."/>
        </authorList>
    </citation>
    <scope>NUCLEOTIDE SEQUENCE [LARGE SCALE GENOMIC DNA]</scope>
    <source>
        <strain>OS185</strain>
    </source>
</reference>
<proteinExistence type="inferred from homology"/>
<organism>
    <name type="scientific">Shewanella baltica (strain OS185)</name>
    <dbReference type="NCBI Taxonomy" id="402882"/>
    <lineage>
        <taxon>Bacteria</taxon>
        <taxon>Pseudomonadati</taxon>
        <taxon>Pseudomonadota</taxon>
        <taxon>Gammaproteobacteria</taxon>
        <taxon>Alteromonadales</taxon>
        <taxon>Shewanellaceae</taxon>
        <taxon>Shewanella</taxon>
    </lineage>
</organism>
<accession>A6WKK3</accession>
<sequence length="71" mass="8345">MPIIKVRENEPFDVALRRFKRSCEKAGILADVRAREFYEKPTTARKRAKAAAVKRLAKKLSRENARRVRLY</sequence>
<evidence type="ECO:0000255" key="1">
    <source>
        <dbReference type="HAMAP-Rule" id="MF_00358"/>
    </source>
</evidence>
<evidence type="ECO:0000305" key="2"/>
<comment type="similarity">
    <text evidence="1">Belongs to the bacterial ribosomal protein bS21 family.</text>
</comment>
<name>RS21_SHEB8</name>
<dbReference type="EMBL" id="CP000753">
    <property type="protein sequence ID" value="ABS07342.1"/>
    <property type="molecule type" value="Genomic_DNA"/>
</dbReference>
<dbReference type="RefSeq" id="WP_006080725.1">
    <property type="nucleotide sequence ID" value="NC_009665.1"/>
</dbReference>
<dbReference type="SMR" id="A6WKK3"/>
<dbReference type="GeneID" id="94729004"/>
<dbReference type="KEGG" id="sbm:Shew185_1191"/>
<dbReference type="HOGENOM" id="CLU_159258_1_0_6"/>
<dbReference type="GO" id="GO:1990904">
    <property type="term" value="C:ribonucleoprotein complex"/>
    <property type="evidence" value="ECO:0007669"/>
    <property type="project" value="UniProtKB-KW"/>
</dbReference>
<dbReference type="GO" id="GO:0005840">
    <property type="term" value="C:ribosome"/>
    <property type="evidence" value="ECO:0007669"/>
    <property type="project" value="UniProtKB-KW"/>
</dbReference>
<dbReference type="GO" id="GO:0003735">
    <property type="term" value="F:structural constituent of ribosome"/>
    <property type="evidence" value="ECO:0007669"/>
    <property type="project" value="InterPro"/>
</dbReference>
<dbReference type="GO" id="GO:0006412">
    <property type="term" value="P:translation"/>
    <property type="evidence" value="ECO:0007669"/>
    <property type="project" value="UniProtKB-UniRule"/>
</dbReference>
<dbReference type="Gene3D" id="1.20.5.1150">
    <property type="entry name" value="Ribosomal protein S8"/>
    <property type="match status" value="1"/>
</dbReference>
<dbReference type="HAMAP" id="MF_00358">
    <property type="entry name" value="Ribosomal_bS21"/>
    <property type="match status" value="1"/>
</dbReference>
<dbReference type="InterPro" id="IPR001911">
    <property type="entry name" value="Ribosomal_bS21"/>
</dbReference>
<dbReference type="InterPro" id="IPR018278">
    <property type="entry name" value="Ribosomal_bS21_CS"/>
</dbReference>
<dbReference type="InterPro" id="IPR038380">
    <property type="entry name" value="Ribosomal_bS21_sf"/>
</dbReference>
<dbReference type="NCBIfam" id="TIGR00030">
    <property type="entry name" value="S21p"/>
    <property type="match status" value="1"/>
</dbReference>
<dbReference type="PANTHER" id="PTHR21109">
    <property type="entry name" value="MITOCHONDRIAL 28S RIBOSOMAL PROTEIN S21"/>
    <property type="match status" value="1"/>
</dbReference>
<dbReference type="PANTHER" id="PTHR21109:SF22">
    <property type="entry name" value="SMALL RIBOSOMAL SUBUNIT PROTEIN BS21"/>
    <property type="match status" value="1"/>
</dbReference>
<dbReference type="Pfam" id="PF01165">
    <property type="entry name" value="Ribosomal_S21"/>
    <property type="match status" value="1"/>
</dbReference>
<dbReference type="PRINTS" id="PR00976">
    <property type="entry name" value="RIBOSOMALS21"/>
</dbReference>
<dbReference type="PROSITE" id="PS01181">
    <property type="entry name" value="RIBOSOMAL_S21"/>
    <property type="match status" value="1"/>
</dbReference>
<keyword id="KW-0687">Ribonucleoprotein</keyword>
<keyword id="KW-0689">Ribosomal protein</keyword>
<protein>
    <recommendedName>
        <fullName evidence="1">Small ribosomal subunit protein bS21</fullName>
    </recommendedName>
    <alternativeName>
        <fullName evidence="2">30S ribosomal protein S21</fullName>
    </alternativeName>
</protein>